<keyword id="KW-0963">Cytoplasm</keyword>
<keyword id="KW-0378">Hydrolase</keyword>
<keyword id="KW-1185">Reference proteome</keyword>
<keyword id="KW-0694">RNA-binding</keyword>
<keyword id="KW-0820">tRNA-binding</keyword>
<accession>Q3JD71</accession>
<comment type="function">
    <text evidence="1">An aminoacyl-tRNA editing enzyme that deacylates mischarged D-aminoacyl-tRNAs. Also deacylates mischarged glycyl-tRNA(Ala), protecting cells against glycine mischarging by AlaRS. Acts via tRNA-based rather than protein-based catalysis; rejects L-amino acids rather than detecting D-amino acids in the active site. By recycling D-aminoacyl-tRNA to D-amino acids and free tRNA molecules, this enzyme counteracts the toxicity associated with the formation of D-aminoacyl-tRNA entities in vivo and helps enforce protein L-homochirality.</text>
</comment>
<comment type="catalytic activity">
    <reaction evidence="1">
        <text>glycyl-tRNA(Ala) + H2O = tRNA(Ala) + glycine + H(+)</text>
        <dbReference type="Rhea" id="RHEA:53744"/>
        <dbReference type="Rhea" id="RHEA-COMP:9657"/>
        <dbReference type="Rhea" id="RHEA-COMP:13640"/>
        <dbReference type="ChEBI" id="CHEBI:15377"/>
        <dbReference type="ChEBI" id="CHEBI:15378"/>
        <dbReference type="ChEBI" id="CHEBI:57305"/>
        <dbReference type="ChEBI" id="CHEBI:78442"/>
        <dbReference type="ChEBI" id="CHEBI:78522"/>
        <dbReference type="EC" id="3.1.1.96"/>
    </reaction>
</comment>
<comment type="catalytic activity">
    <reaction evidence="1">
        <text>a D-aminoacyl-tRNA + H2O = a tRNA + a D-alpha-amino acid + H(+)</text>
        <dbReference type="Rhea" id="RHEA:13953"/>
        <dbReference type="Rhea" id="RHEA-COMP:10123"/>
        <dbReference type="Rhea" id="RHEA-COMP:10124"/>
        <dbReference type="ChEBI" id="CHEBI:15377"/>
        <dbReference type="ChEBI" id="CHEBI:15378"/>
        <dbReference type="ChEBI" id="CHEBI:59871"/>
        <dbReference type="ChEBI" id="CHEBI:78442"/>
        <dbReference type="ChEBI" id="CHEBI:79333"/>
        <dbReference type="EC" id="3.1.1.96"/>
    </reaction>
</comment>
<comment type="subunit">
    <text evidence="1">Homodimer.</text>
</comment>
<comment type="subcellular location">
    <subcellularLocation>
        <location evidence="1">Cytoplasm</location>
    </subcellularLocation>
</comment>
<comment type="domain">
    <text evidence="1">A Gly-cisPro motif from one monomer fits into the active site of the other monomer to allow specific chiral rejection of L-amino acids.</text>
</comment>
<comment type="similarity">
    <text evidence="1">Belongs to the DTD family.</text>
</comment>
<proteinExistence type="inferred from homology"/>
<protein>
    <recommendedName>
        <fullName evidence="1">D-aminoacyl-tRNA deacylase</fullName>
        <shortName evidence="1">DTD</shortName>
        <ecNumber evidence="1">3.1.1.96</ecNumber>
    </recommendedName>
    <alternativeName>
        <fullName evidence="1">Gly-tRNA(Ala) deacylase</fullName>
    </alternativeName>
</protein>
<name>DTD_NITOC</name>
<reference key="1">
    <citation type="journal article" date="2006" name="Appl. Environ. Microbiol.">
        <title>Complete genome sequence of the marine, chemolithoautotrophic, ammonia-oxidizing bacterium Nitrosococcus oceani ATCC 19707.</title>
        <authorList>
            <person name="Klotz M.G."/>
            <person name="Arp D.J."/>
            <person name="Chain P.S.G."/>
            <person name="El-Sheikh A.F."/>
            <person name="Hauser L.J."/>
            <person name="Hommes N.G."/>
            <person name="Larimer F.W."/>
            <person name="Malfatti S.A."/>
            <person name="Norton J.M."/>
            <person name="Poret-Peterson A.T."/>
            <person name="Vergez L.M."/>
            <person name="Ward B.B."/>
        </authorList>
    </citation>
    <scope>NUCLEOTIDE SEQUENCE [LARGE SCALE GENOMIC DNA]</scope>
    <source>
        <strain>ATCC 19707 / BCRC 17464 / JCM 30415 / NCIMB 11848 / C-107</strain>
    </source>
</reference>
<dbReference type="EC" id="3.1.1.96" evidence="1"/>
<dbReference type="EMBL" id="CP000127">
    <property type="protein sequence ID" value="ABA57225.1"/>
    <property type="molecule type" value="Genomic_DNA"/>
</dbReference>
<dbReference type="RefSeq" id="WP_011330462.1">
    <property type="nucleotide sequence ID" value="NC_007484.1"/>
</dbReference>
<dbReference type="SMR" id="Q3JD71"/>
<dbReference type="FunCoup" id="Q3JD71">
    <property type="interactions" value="449"/>
</dbReference>
<dbReference type="STRING" id="323261.Noc_0711"/>
<dbReference type="KEGG" id="noc:Noc_0711"/>
<dbReference type="eggNOG" id="COG1490">
    <property type="taxonomic scope" value="Bacteria"/>
</dbReference>
<dbReference type="HOGENOM" id="CLU_076901_1_1_6"/>
<dbReference type="InParanoid" id="Q3JD71"/>
<dbReference type="Proteomes" id="UP000006838">
    <property type="component" value="Chromosome"/>
</dbReference>
<dbReference type="GO" id="GO:0005737">
    <property type="term" value="C:cytoplasm"/>
    <property type="evidence" value="ECO:0007669"/>
    <property type="project" value="UniProtKB-SubCell"/>
</dbReference>
<dbReference type="GO" id="GO:0051500">
    <property type="term" value="F:D-tyrosyl-tRNA(Tyr) deacylase activity"/>
    <property type="evidence" value="ECO:0007669"/>
    <property type="project" value="TreeGrafter"/>
</dbReference>
<dbReference type="GO" id="GO:0106026">
    <property type="term" value="F:Gly-tRNA(Ala) deacylase activity"/>
    <property type="evidence" value="ECO:0007669"/>
    <property type="project" value="UniProtKB-UniRule"/>
</dbReference>
<dbReference type="GO" id="GO:0043908">
    <property type="term" value="F:Ser(Gly)-tRNA(Ala) hydrolase activity"/>
    <property type="evidence" value="ECO:0007669"/>
    <property type="project" value="UniProtKB-UniRule"/>
</dbReference>
<dbReference type="GO" id="GO:0000049">
    <property type="term" value="F:tRNA binding"/>
    <property type="evidence" value="ECO:0007669"/>
    <property type="project" value="UniProtKB-UniRule"/>
</dbReference>
<dbReference type="GO" id="GO:0019478">
    <property type="term" value="P:D-amino acid catabolic process"/>
    <property type="evidence" value="ECO:0007669"/>
    <property type="project" value="UniProtKB-UniRule"/>
</dbReference>
<dbReference type="FunFam" id="3.50.80.10:FF:000001">
    <property type="entry name" value="D-aminoacyl-tRNA deacylase"/>
    <property type="match status" value="1"/>
</dbReference>
<dbReference type="Gene3D" id="3.50.80.10">
    <property type="entry name" value="D-tyrosyl-tRNA(Tyr) deacylase"/>
    <property type="match status" value="1"/>
</dbReference>
<dbReference type="HAMAP" id="MF_00518">
    <property type="entry name" value="Deacylase_Dtd"/>
    <property type="match status" value="1"/>
</dbReference>
<dbReference type="InterPro" id="IPR003732">
    <property type="entry name" value="Daa-tRNA_deacyls_DTD"/>
</dbReference>
<dbReference type="InterPro" id="IPR023509">
    <property type="entry name" value="DTD-like_sf"/>
</dbReference>
<dbReference type="NCBIfam" id="TIGR00256">
    <property type="entry name" value="D-aminoacyl-tRNA deacylase"/>
    <property type="match status" value="1"/>
</dbReference>
<dbReference type="PANTHER" id="PTHR10472:SF5">
    <property type="entry name" value="D-AMINOACYL-TRNA DEACYLASE 1"/>
    <property type="match status" value="1"/>
</dbReference>
<dbReference type="PANTHER" id="PTHR10472">
    <property type="entry name" value="D-TYROSYL-TRNA TYR DEACYLASE"/>
    <property type="match status" value="1"/>
</dbReference>
<dbReference type="Pfam" id="PF02580">
    <property type="entry name" value="Tyr_Deacylase"/>
    <property type="match status" value="1"/>
</dbReference>
<dbReference type="SUPFAM" id="SSF69500">
    <property type="entry name" value="DTD-like"/>
    <property type="match status" value="1"/>
</dbReference>
<sequence length="155" mass="16498">MIALLQRVTQAQVTVAGEVIARIGPGLVVLVGIERGDGPPQAERLLERLLSYRVFADSKGHMNLSLADVEGALLVVPQFTLAADTGKGTRPSFTPAAPPPLGKQIFEYLFAQAKARYSRCAAGRFGAHMQLSLTNDGPVTFTLQIPPAVQTATTE</sequence>
<evidence type="ECO:0000255" key="1">
    <source>
        <dbReference type="HAMAP-Rule" id="MF_00518"/>
    </source>
</evidence>
<feature type="chain" id="PRO_0000259293" description="D-aminoacyl-tRNA deacylase">
    <location>
        <begin position="1"/>
        <end position="155"/>
    </location>
</feature>
<feature type="short sequence motif" description="Gly-cisPro motif, important for rejection of L-amino acids" evidence="1">
    <location>
        <begin position="137"/>
        <end position="138"/>
    </location>
</feature>
<organism>
    <name type="scientific">Nitrosococcus oceani (strain ATCC 19707 / BCRC 17464 / JCM 30415 / NCIMB 11848 / C-107)</name>
    <dbReference type="NCBI Taxonomy" id="323261"/>
    <lineage>
        <taxon>Bacteria</taxon>
        <taxon>Pseudomonadati</taxon>
        <taxon>Pseudomonadota</taxon>
        <taxon>Gammaproteobacteria</taxon>
        <taxon>Chromatiales</taxon>
        <taxon>Chromatiaceae</taxon>
        <taxon>Nitrosococcus</taxon>
    </lineage>
</organism>
<gene>
    <name evidence="1" type="primary">dtd</name>
    <name type="ordered locus">Noc_0711</name>
</gene>